<keyword id="KW-0025">Alternative splicing</keyword>
<keyword id="KW-0597">Phosphoprotein</keyword>
<keyword id="KW-1185">Reference proteome</keyword>
<reference key="1">
    <citation type="journal article" date="1997" name="Proc. Natl. Acad. Sci. U.S.A.">
        <title>A screen for fast evolving genes from Drosophila.</title>
        <authorList>
            <person name="Schmid K.J."/>
            <person name="Tautz D."/>
        </authorList>
    </citation>
    <scope>NUCLEOTIDE SEQUENCE [MRNA] (ISOFORM B)</scope>
    <source>
        <strain>Canton-S</strain>
        <tissue>Embryo</tissue>
    </source>
</reference>
<reference key="2">
    <citation type="journal article" date="2000" name="Science">
        <title>The genome sequence of Drosophila melanogaster.</title>
        <authorList>
            <person name="Adams M.D."/>
            <person name="Celniker S.E."/>
            <person name="Holt R.A."/>
            <person name="Evans C.A."/>
            <person name="Gocayne J.D."/>
            <person name="Amanatides P.G."/>
            <person name="Scherer S.E."/>
            <person name="Li P.W."/>
            <person name="Hoskins R.A."/>
            <person name="Galle R.F."/>
            <person name="George R.A."/>
            <person name="Lewis S.E."/>
            <person name="Richards S."/>
            <person name="Ashburner M."/>
            <person name="Henderson S.N."/>
            <person name="Sutton G.G."/>
            <person name="Wortman J.R."/>
            <person name="Yandell M.D."/>
            <person name="Zhang Q."/>
            <person name="Chen L.X."/>
            <person name="Brandon R.C."/>
            <person name="Rogers Y.-H.C."/>
            <person name="Blazej R.G."/>
            <person name="Champe M."/>
            <person name="Pfeiffer B.D."/>
            <person name="Wan K.H."/>
            <person name="Doyle C."/>
            <person name="Baxter E.G."/>
            <person name="Helt G."/>
            <person name="Nelson C.R."/>
            <person name="Miklos G.L.G."/>
            <person name="Abril J.F."/>
            <person name="Agbayani A."/>
            <person name="An H.-J."/>
            <person name="Andrews-Pfannkoch C."/>
            <person name="Baldwin D."/>
            <person name="Ballew R.M."/>
            <person name="Basu A."/>
            <person name="Baxendale J."/>
            <person name="Bayraktaroglu L."/>
            <person name="Beasley E.M."/>
            <person name="Beeson K.Y."/>
            <person name="Benos P.V."/>
            <person name="Berman B.P."/>
            <person name="Bhandari D."/>
            <person name="Bolshakov S."/>
            <person name="Borkova D."/>
            <person name="Botchan M.R."/>
            <person name="Bouck J."/>
            <person name="Brokstein P."/>
            <person name="Brottier P."/>
            <person name="Burtis K.C."/>
            <person name="Busam D.A."/>
            <person name="Butler H."/>
            <person name="Cadieu E."/>
            <person name="Center A."/>
            <person name="Chandra I."/>
            <person name="Cherry J.M."/>
            <person name="Cawley S."/>
            <person name="Dahlke C."/>
            <person name="Davenport L.B."/>
            <person name="Davies P."/>
            <person name="de Pablos B."/>
            <person name="Delcher A."/>
            <person name="Deng Z."/>
            <person name="Mays A.D."/>
            <person name="Dew I."/>
            <person name="Dietz S.M."/>
            <person name="Dodson K."/>
            <person name="Doup L.E."/>
            <person name="Downes M."/>
            <person name="Dugan-Rocha S."/>
            <person name="Dunkov B.C."/>
            <person name="Dunn P."/>
            <person name="Durbin K.J."/>
            <person name="Evangelista C.C."/>
            <person name="Ferraz C."/>
            <person name="Ferriera S."/>
            <person name="Fleischmann W."/>
            <person name="Fosler C."/>
            <person name="Gabrielian A.E."/>
            <person name="Garg N.S."/>
            <person name="Gelbart W.M."/>
            <person name="Glasser K."/>
            <person name="Glodek A."/>
            <person name="Gong F."/>
            <person name="Gorrell J.H."/>
            <person name="Gu Z."/>
            <person name="Guan P."/>
            <person name="Harris M."/>
            <person name="Harris N.L."/>
            <person name="Harvey D.A."/>
            <person name="Heiman T.J."/>
            <person name="Hernandez J.R."/>
            <person name="Houck J."/>
            <person name="Hostin D."/>
            <person name="Houston K.A."/>
            <person name="Howland T.J."/>
            <person name="Wei M.-H."/>
            <person name="Ibegwam C."/>
            <person name="Jalali M."/>
            <person name="Kalush F."/>
            <person name="Karpen G.H."/>
            <person name="Ke Z."/>
            <person name="Kennison J.A."/>
            <person name="Ketchum K.A."/>
            <person name="Kimmel B.E."/>
            <person name="Kodira C.D."/>
            <person name="Kraft C.L."/>
            <person name="Kravitz S."/>
            <person name="Kulp D."/>
            <person name="Lai Z."/>
            <person name="Lasko P."/>
            <person name="Lei Y."/>
            <person name="Levitsky A.A."/>
            <person name="Li J.H."/>
            <person name="Li Z."/>
            <person name="Liang Y."/>
            <person name="Lin X."/>
            <person name="Liu X."/>
            <person name="Mattei B."/>
            <person name="McIntosh T.C."/>
            <person name="McLeod M.P."/>
            <person name="McPherson D."/>
            <person name="Merkulov G."/>
            <person name="Milshina N.V."/>
            <person name="Mobarry C."/>
            <person name="Morris J."/>
            <person name="Moshrefi A."/>
            <person name="Mount S.M."/>
            <person name="Moy M."/>
            <person name="Murphy B."/>
            <person name="Murphy L."/>
            <person name="Muzny D.M."/>
            <person name="Nelson D.L."/>
            <person name="Nelson D.R."/>
            <person name="Nelson K.A."/>
            <person name="Nixon K."/>
            <person name="Nusskern D.R."/>
            <person name="Pacleb J.M."/>
            <person name="Palazzolo M."/>
            <person name="Pittman G.S."/>
            <person name="Pan S."/>
            <person name="Pollard J."/>
            <person name="Puri V."/>
            <person name="Reese M.G."/>
            <person name="Reinert K."/>
            <person name="Remington K."/>
            <person name="Saunders R.D.C."/>
            <person name="Scheeler F."/>
            <person name="Shen H."/>
            <person name="Shue B.C."/>
            <person name="Siden-Kiamos I."/>
            <person name="Simpson M."/>
            <person name="Skupski M.P."/>
            <person name="Smith T.J."/>
            <person name="Spier E."/>
            <person name="Spradling A.C."/>
            <person name="Stapleton M."/>
            <person name="Strong R."/>
            <person name="Sun E."/>
            <person name="Svirskas R."/>
            <person name="Tector C."/>
            <person name="Turner R."/>
            <person name="Venter E."/>
            <person name="Wang A.H."/>
            <person name="Wang X."/>
            <person name="Wang Z.-Y."/>
            <person name="Wassarman D.A."/>
            <person name="Weinstock G.M."/>
            <person name="Weissenbach J."/>
            <person name="Williams S.M."/>
            <person name="Woodage T."/>
            <person name="Worley K.C."/>
            <person name="Wu D."/>
            <person name="Yang S."/>
            <person name="Yao Q.A."/>
            <person name="Ye J."/>
            <person name="Yeh R.-F."/>
            <person name="Zaveri J.S."/>
            <person name="Zhan M."/>
            <person name="Zhang G."/>
            <person name="Zhao Q."/>
            <person name="Zheng L."/>
            <person name="Zheng X.H."/>
            <person name="Zhong F.N."/>
            <person name="Zhong W."/>
            <person name="Zhou X."/>
            <person name="Zhu S.C."/>
            <person name="Zhu X."/>
            <person name="Smith H.O."/>
            <person name="Gibbs R.A."/>
            <person name="Myers E.W."/>
            <person name="Rubin G.M."/>
            <person name="Venter J.C."/>
        </authorList>
    </citation>
    <scope>NUCLEOTIDE SEQUENCE [LARGE SCALE GENOMIC DNA]</scope>
    <source>
        <strain>Berkeley</strain>
    </source>
</reference>
<reference key="3">
    <citation type="journal article" date="2002" name="Genome Biol.">
        <title>Annotation of the Drosophila melanogaster euchromatic genome: a systematic review.</title>
        <authorList>
            <person name="Misra S."/>
            <person name="Crosby M.A."/>
            <person name="Mungall C.J."/>
            <person name="Matthews B.B."/>
            <person name="Campbell K.S."/>
            <person name="Hradecky P."/>
            <person name="Huang Y."/>
            <person name="Kaminker J.S."/>
            <person name="Millburn G.H."/>
            <person name="Prochnik S.E."/>
            <person name="Smith C.D."/>
            <person name="Tupy J.L."/>
            <person name="Whitfield E.J."/>
            <person name="Bayraktaroglu L."/>
            <person name="Berman B.P."/>
            <person name="Bettencourt B.R."/>
            <person name="Celniker S.E."/>
            <person name="de Grey A.D.N.J."/>
            <person name="Drysdale R.A."/>
            <person name="Harris N.L."/>
            <person name="Richter J."/>
            <person name="Russo S."/>
            <person name="Schroeder A.J."/>
            <person name="Shu S.Q."/>
            <person name="Stapleton M."/>
            <person name="Yamada C."/>
            <person name="Ashburner M."/>
            <person name="Gelbart W.M."/>
            <person name="Rubin G.M."/>
            <person name="Lewis S.E."/>
        </authorList>
    </citation>
    <scope>GENOME REANNOTATION</scope>
    <scope>ALTERNATIVE SPLICING</scope>
    <source>
        <strain>Berkeley</strain>
    </source>
</reference>
<reference key="4">
    <citation type="journal article" date="2002" name="Genome Biol.">
        <title>A Drosophila full-length cDNA resource.</title>
        <authorList>
            <person name="Stapleton M."/>
            <person name="Carlson J.W."/>
            <person name="Brokstein P."/>
            <person name="Yu C."/>
            <person name="Champe M."/>
            <person name="George R.A."/>
            <person name="Guarin H."/>
            <person name="Kronmiller B."/>
            <person name="Pacleb J.M."/>
            <person name="Park S."/>
            <person name="Wan K.H."/>
            <person name="Rubin G.M."/>
            <person name="Celniker S.E."/>
        </authorList>
    </citation>
    <scope>NUCLEOTIDE SEQUENCE [LARGE SCALE MRNA] (ISOFORM A)</scope>
    <source>
        <strain>Berkeley</strain>
        <tissue>Embryo</tissue>
    </source>
</reference>
<reference key="5">
    <citation type="journal article" date="2008" name="J. Proteome Res.">
        <title>Phosphoproteome analysis of Drosophila melanogaster embryos.</title>
        <authorList>
            <person name="Zhai B."/>
            <person name="Villen J."/>
            <person name="Beausoleil S.A."/>
            <person name="Mintseris J."/>
            <person name="Gygi S.P."/>
        </authorList>
    </citation>
    <scope>PHOSPHORYLATION [LARGE SCALE ANALYSIS] AT SER-134</scope>
    <scope>IDENTIFICATION BY MASS SPECTROMETRY</scope>
    <source>
        <tissue>Embryo</tissue>
    </source>
</reference>
<dbReference type="EMBL" id="AF005857">
    <property type="protein sequence ID" value="AAB81488.1"/>
    <property type="molecule type" value="mRNA"/>
</dbReference>
<dbReference type="EMBL" id="AE013599">
    <property type="protein sequence ID" value="AAF47296.1"/>
    <property type="molecule type" value="Genomic_DNA"/>
</dbReference>
<dbReference type="EMBL" id="AE013599">
    <property type="protein sequence ID" value="AAM70801.1"/>
    <property type="molecule type" value="Genomic_DNA"/>
</dbReference>
<dbReference type="EMBL" id="AY071127">
    <property type="protein sequence ID" value="AAL48749.1"/>
    <property type="status" value="ALT_FRAME"/>
    <property type="molecule type" value="mRNA"/>
</dbReference>
<dbReference type="RefSeq" id="NP_001246513.1">
    <molecule id="Q8MMC4-2"/>
    <property type="nucleotide sequence ID" value="NM_001259584.2"/>
</dbReference>
<dbReference type="RefSeq" id="NP_611981.2">
    <molecule id="Q8MMC4-2"/>
    <property type="nucleotide sequence ID" value="NM_138137.4"/>
</dbReference>
<dbReference type="RefSeq" id="NP_726501.1">
    <molecule id="Q8MMC4-1"/>
    <property type="nucleotide sequence ID" value="NM_166700.3"/>
</dbReference>
<dbReference type="BioGRID" id="63555">
    <property type="interactions" value="5"/>
</dbReference>
<dbReference type="FunCoup" id="Q8MMC4">
    <property type="interactions" value="1172"/>
</dbReference>
<dbReference type="IntAct" id="Q8MMC4">
    <property type="interactions" value="8"/>
</dbReference>
<dbReference type="STRING" id="7227.FBpp0072299"/>
<dbReference type="GlyGen" id="Q8MMC4">
    <property type="glycosylation" value="1 site"/>
</dbReference>
<dbReference type="iPTMnet" id="Q8MMC4"/>
<dbReference type="PaxDb" id="7227-FBpp0072299"/>
<dbReference type="DNASU" id="37987"/>
<dbReference type="EnsemblMetazoa" id="FBtr0072391">
    <molecule id="Q8MMC4-2"/>
    <property type="protein sequence ID" value="FBpp0072298"/>
    <property type="gene ID" value="FBgn0022343"/>
</dbReference>
<dbReference type="EnsemblMetazoa" id="FBtr0072392">
    <molecule id="Q8MMC4-1"/>
    <property type="protein sequence ID" value="FBpp0072299"/>
    <property type="gene ID" value="FBgn0022343"/>
</dbReference>
<dbReference type="EnsemblMetazoa" id="FBtr0309242">
    <molecule id="Q8MMC4-2"/>
    <property type="protein sequence ID" value="FBpp0301181"/>
    <property type="gene ID" value="FBgn0022343"/>
</dbReference>
<dbReference type="GeneID" id="37987"/>
<dbReference type="KEGG" id="dme:Dmel_CG3760"/>
<dbReference type="UCSC" id="CG3760-RA">
    <molecule id="Q8MMC4-1"/>
    <property type="organism name" value="d. melanogaster"/>
</dbReference>
<dbReference type="AGR" id="FB:FBgn0022343"/>
<dbReference type="FlyBase" id="FBgn0022343">
    <property type="gene designation" value="CG3760"/>
</dbReference>
<dbReference type="VEuPathDB" id="VectorBase:FBgn0022343"/>
<dbReference type="eggNOG" id="ENOG502S35X">
    <property type="taxonomic scope" value="Eukaryota"/>
</dbReference>
<dbReference type="InParanoid" id="Q8MMC4"/>
<dbReference type="OMA" id="PWNKPVE"/>
<dbReference type="OrthoDB" id="6288097at2759"/>
<dbReference type="PhylomeDB" id="Q8MMC4"/>
<dbReference type="BioGRID-ORCS" id="37987">
    <property type="hits" value="1 hit in 1 CRISPR screen"/>
</dbReference>
<dbReference type="GenomeRNAi" id="37987"/>
<dbReference type="PRO" id="PR:Q8MMC4"/>
<dbReference type="Proteomes" id="UP000000803">
    <property type="component" value="Chromosome 2R"/>
</dbReference>
<dbReference type="Bgee" id="FBgn0022343">
    <property type="expression patterns" value="Expressed in wing disc and 148 other cell types or tissues"/>
</dbReference>
<dbReference type="ExpressionAtlas" id="Q8MMC4">
    <property type="expression patterns" value="baseline and differential"/>
</dbReference>
<dbReference type="GO" id="GO:0005737">
    <property type="term" value="C:cytoplasm"/>
    <property type="evidence" value="ECO:0000318"/>
    <property type="project" value="GO_Central"/>
</dbReference>
<dbReference type="InterPro" id="IPR026806">
    <property type="entry name" value="CDV3"/>
</dbReference>
<dbReference type="PANTHER" id="PTHR16284">
    <property type="entry name" value="PROTEIN CDV3 HOMOLOG"/>
    <property type="match status" value="1"/>
</dbReference>
<dbReference type="PANTHER" id="PTHR16284:SF13">
    <property type="entry name" value="PROTEIN CDV3 HOMOLOG"/>
    <property type="match status" value="1"/>
</dbReference>
<dbReference type="Pfam" id="PF15359">
    <property type="entry name" value="CDV3"/>
    <property type="match status" value="1"/>
</dbReference>
<protein>
    <recommendedName>
        <fullName>Protein CDV3 homolog</fullName>
    </recommendedName>
    <alternativeName>
        <fullName>Protein anon-2C9</fullName>
    </alternativeName>
</protein>
<comment type="alternative products">
    <event type="alternative splicing"/>
    <isoform>
        <id>Q8MMC4-1</id>
        <name>A</name>
        <sequence type="displayed"/>
    </isoform>
    <isoform>
        <id>Q8MMC4-2</id>
        <name>B</name>
        <sequence type="described" ref="VSP_027764"/>
    </isoform>
</comment>
<comment type="similarity">
    <text evidence="4">Belongs to the CDV3 family.</text>
</comment>
<comment type="sequence caution" evidence="4">
    <conflict type="frameshift">
        <sequence resource="EMBL-CDS" id="AAL48749"/>
    </conflict>
</comment>
<name>CDV3_DROME</name>
<gene>
    <name type="ORF">CG3760</name>
</gene>
<proteinExistence type="evidence at protein level"/>
<feature type="chain" id="PRO_0000299568" description="Protein CDV3 homolog">
    <location>
        <begin position="1"/>
        <end position="271"/>
    </location>
</feature>
<feature type="region of interest" description="Disordered" evidence="1">
    <location>
        <begin position="37"/>
        <end position="151"/>
    </location>
</feature>
<feature type="region of interest" description="Disordered" evidence="1">
    <location>
        <begin position="186"/>
        <end position="271"/>
    </location>
</feature>
<feature type="compositionally biased region" description="Basic and acidic residues" evidence="1">
    <location>
        <begin position="37"/>
        <end position="47"/>
    </location>
</feature>
<feature type="compositionally biased region" description="Low complexity" evidence="1">
    <location>
        <begin position="48"/>
        <end position="61"/>
    </location>
</feature>
<feature type="compositionally biased region" description="Acidic residues" evidence="1">
    <location>
        <begin position="73"/>
        <end position="82"/>
    </location>
</feature>
<feature type="compositionally biased region" description="Polar residues" evidence="1">
    <location>
        <begin position="95"/>
        <end position="114"/>
    </location>
</feature>
<feature type="compositionally biased region" description="Basic and acidic residues" evidence="1">
    <location>
        <begin position="224"/>
        <end position="242"/>
    </location>
</feature>
<feature type="modified residue" description="Phosphoserine" evidence="2">
    <location>
        <position position="134"/>
    </location>
</feature>
<feature type="splice variant" id="VSP_027764" description="In isoform B." evidence="3">
    <location>
        <begin position="100"/>
        <end position="105"/>
    </location>
</feature>
<feature type="sequence conflict" description="In Ref. 1; AAB81488." evidence="4" ref="1">
    <original>H</original>
    <variation>P</variation>
    <location>
        <position position="173"/>
    </location>
</feature>
<accession>Q8MMC4</accession>
<accession>O16052</accession>
<accession>Q8SZ44</accession>
<accession>Q9W0Y3</accession>
<evidence type="ECO:0000256" key="1">
    <source>
        <dbReference type="SAM" id="MobiDB-lite"/>
    </source>
</evidence>
<evidence type="ECO:0000269" key="2">
    <source>
    </source>
</evidence>
<evidence type="ECO:0000303" key="3">
    <source>
    </source>
</evidence>
<evidence type="ECO:0000305" key="4"/>
<sequence length="271" mass="29636">MAELDDFFAKKDKKKSKNKTKFVTADEMVKNLEDGTKREVVKPKKPEVAAGGVAVVGENENSGTKVPESAPPVEEEWKEFEEEQRKDYSGLKIGQLSTISSARSRTAQESSESQAARVPSAPDGGNYNEDDEDSNGYDNADVNKERVGHGPWKKVVPAEEVMQIPVPVEVEKHSSKTYVSPALRYSQQAGSGLGGGPTGGALRPRRAAPDITNTEFFPTLSAARPEEQRKKKNEPAFEEVRHGSRFQRVQESTAAPVAASNRFQSLDDEAS</sequence>
<organism>
    <name type="scientific">Drosophila melanogaster</name>
    <name type="common">Fruit fly</name>
    <dbReference type="NCBI Taxonomy" id="7227"/>
    <lineage>
        <taxon>Eukaryota</taxon>
        <taxon>Metazoa</taxon>
        <taxon>Ecdysozoa</taxon>
        <taxon>Arthropoda</taxon>
        <taxon>Hexapoda</taxon>
        <taxon>Insecta</taxon>
        <taxon>Pterygota</taxon>
        <taxon>Neoptera</taxon>
        <taxon>Endopterygota</taxon>
        <taxon>Diptera</taxon>
        <taxon>Brachycera</taxon>
        <taxon>Muscomorpha</taxon>
        <taxon>Ephydroidea</taxon>
        <taxon>Drosophilidae</taxon>
        <taxon>Drosophila</taxon>
        <taxon>Sophophora</taxon>
    </lineage>
</organism>